<sequence length="660" mass="75077">MDDWKPSPLIKPFGARKKRSWYLTWKYKLTNQRALRRFCQTGAVLFLLVTVIVNIKLILDTRRAISEASEDLEPEQDYDEALGRLEPPRRIGSGPRRVLDVEVYSSRSKVYVAVDGTTVLEDEAQEQGRGIHVIVLNQATGHVMAKRVFDTYSPHEDEAMVLFLNMVAPGRVLICTVKDEGSFHLKDTAKALLRSLGSQAGPALGWRDTWAFVGRKGGPVLGEKHSKSPALSSWGDPVLLKTDVPLSSAEEAECHWADTELNRRRRRFCSKVEGYGSVCSCKDPTPIEFSPDPLPDNKVLNVPVAVIAGNRPNYLYRMLRSLLSAQGVSPQMITVFIDGYYEEPMDVVALFGLRGIQHTPISIKNARVSQHYKASLTATFNLFPEAKFAVVLEEDLDIAVDFFSFLSQSIHLLEEDDSLYCISAWNDQGYEHTAEDPALLYRVETMPGLGWVLRKSLYKEELEPKWPTPEKLWDWDMWMRMPEQRRGRECIIPDVSRSYHFGIVGLNMNGYFHEAYFKKHKFNTVPGVQLRNVDSLKKDAYEVEVHRLLSEAEVLDHSKNPCEDSFLPDTEGHTYVAFIRMEKDDDFTTWTQLAKCLRIWDLDVRGNHRGLWRLFRKKNHFLVVGVPASPYSMKKPPSITPIFLESPPKEEGGPGAAEQT</sequence>
<name>PMGT1_BOVIN</name>
<keyword id="KW-1015">Disulfide bond</keyword>
<keyword id="KW-0328">Glycosyltransferase</keyword>
<keyword id="KW-0333">Golgi apparatus</keyword>
<keyword id="KW-0430">Lectin</keyword>
<keyword id="KW-0464">Manganese</keyword>
<keyword id="KW-0472">Membrane</keyword>
<keyword id="KW-0479">Metal-binding</keyword>
<keyword id="KW-0597">Phosphoprotein</keyword>
<keyword id="KW-1185">Reference proteome</keyword>
<keyword id="KW-0735">Signal-anchor</keyword>
<keyword id="KW-0808">Transferase</keyword>
<keyword id="KW-0812">Transmembrane</keyword>
<keyword id="KW-1133">Transmembrane helix</keyword>
<organism>
    <name type="scientific">Bos taurus</name>
    <name type="common">Bovine</name>
    <dbReference type="NCBI Taxonomy" id="9913"/>
    <lineage>
        <taxon>Eukaryota</taxon>
        <taxon>Metazoa</taxon>
        <taxon>Chordata</taxon>
        <taxon>Craniata</taxon>
        <taxon>Vertebrata</taxon>
        <taxon>Euteleostomi</taxon>
        <taxon>Mammalia</taxon>
        <taxon>Eutheria</taxon>
        <taxon>Laurasiatheria</taxon>
        <taxon>Artiodactyla</taxon>
        <taxon>Ruminantia</taxon>
        <taxon>Pecora</taxon>
        <taxon>Bovidae</taxon>
        <taxon>Bovinae</taxon>
        <taxon>Bos</taxon>
    </lineage>
</organism>
<evidence type="ECO:0000250" key="1">
    <source>
        <dbReference type="UniProtKB" id="Q8WZA1"/>
    </source>
</evidence>
<evidence type="ECO:0000255" key="2"/>
<evidence type="ECO:0000255" key="3">
    <source>
        <dbReference type="PROSITE-ProRule" id="PRU01375"/>
    </source>
</evidence>
<evidence type="ECO:0000256" key="4">
    <source>
        <dbReference type="SAM" id="MobiDB-lite"/>
    </source>
</evidence>
<evidence type="ECO:0000305" key="5"/>
<reference key="1">
    <citation type="journal article" date="2005" name="BMC Genomics">
        <title>Characterization of 954 bovine full-CDS cDNA sequences.</title>
        <authorList>
            <person name="Harhay G.P."/>
            <person name="Sonstegard T.S."/>
            <person name="Keele J.W."/>
            <person name="Heaton M.P."/>
            <person name="Clawson M.L."/>
            <person name="Snelling W.M."/>
            <person name="Wiedmann R.T."/>
            <person name="Van Tassell C.P."/>
            <person name="Smith T.P.L."/>
        </authorList>
    </citation>
    <scope>NUCLEOTIDE SEQUENCE [LARGE SCALE MRNA]</scope>
</reference>
<protein>
    <recommendedName>
        <fullName>Protein O-linked-mannose beta-1,2-N-acetylglucosaminyltransferase 1</fullName>
        <shortName>POMGnT1</shortName>
        <ecNumber evidence="1">2.4.1.-</ecNumber>
    </recommendedName>
</protein>
<accession>Q5EAB6</accession>
<dbReference type="EC" id="2.4.1.-" evidence="1"/>
<dbReference type="EMBL" id="BT020653">
    <property type="protein sequence ID" value="AAX08670.1"/>
    <property type="molecule type" value="mRNA"/>
</dbReference>
<dbReference type="SMR" id="Q5EAB6"/>
<dbReference type="FunCoup" id="Q5EAB6">
    <property type="interactions" value="622"/>
</dbReference>
<dbReference type="STRING" id="9913.ENSBTAP00000040690"/>
<dbReference type="CAZy" id="GT13">
    <property type="family name" value="Glycosyltransferase Family 13"/>
</dbReference>
<dbReference type="PaxDb" id="9913-ENSBTAP00000017718"/>
<dbReference type="eggNOG" id="ENOG502QSG3">
    <property type="taxonomic scope" value="Eukaryota"/>
</dbReference>
<dbReference type="InParanoid" id="Q5EAB6"/>
<dbReference type="OrthoDB" id="440755at2759"/>
<dbReference type="UniPathway" id="UPA00378"/>
<dbReference type="Proteomes" id="UP000009136">
    <property type="component" value="Unplaced"/>
</dbReference>
<dbReference type="GO" id="GO:0000139">
    <property type="term" value="C:Golgi membrane"/>
    <property type="evidence" value="ECO:0000250"/>
    <property type="project" value="UniProtKB"/>
</dbReference>
<dbReference type="GO" id="GO:0016020">
    <property type="term" value="C:membrane"/>
    <property type="evidence" value="ECO:0000250"/>
    <property type="project" value="UniProtKB"/>
</dbReference>
<dbReference type="GO" id="GO:0008375">
    <property type="term" value="F:acetylglucosaminyltransferase activity"/>
    <property type="evidence" value="ECO:0000250"/>
    <property type="project" value="UniProtKB"/>
</dbReference>
<dbReference type="GO" id="GO:0047223">
    <property type="term" value="F:beta-1,3-galactosyl-O-glycosyl-glycoprotein beta-1,3-N-acetylglucosaminyltransferase activity"/>
    <property type="evidence" value="ECO:0000318"/>
    <property type="project" value="GO_Central"/>
</dbReference>
<dbReference type="GO" id="GO:0030246">
    <property type="term" value="F:carbohydrate binding"/>
    <property type="evidence" value="ECO:0007669"/>
    <property type="project" value="UniProtKB-KW"/>
</dbReference>
<dbReference type="GO" id="GO:0030145">
    <property type="term" value="F:manganese ion binding"/>
    <property type="evidence" value="ECO:0000250"/>
    <property type="project" value="UniProtKB"/>
</dbReference>
<dbReference type="GO" id="GO:0016266">
    <property type="term" value="P:O-glycan processing"/>
    <property type="evidence" value="ECO:0000250"/>
    <property type="project" value="UniProtKB"/>
</dbReference>
<dbReference type="GO" id="GO:0006493">
    <property type="term" value="P:protein O-linked glycosylation"/>
    <property type="evidence" value="ECO:0000250"/>
    <property type="project" value="UniProtKB"/>
</dbReference>
<dbReference type="CDD" id="cd02514">
    <property type="entry name" value="GT13_GLCNAC-TI"/>
    <property type="match status" value="1"/>
</dbReference>
<dbReference type="CDD" id="cd13937">
    <property type="entry name" value="PANDER_GnT-1_2_like"/>
    <property type="match status" value="1"/>
</dbReference>
<dbReference type="FunFam" id="3.90.550.10:FF:000038">
    <property type="entry name" value="protein O-linked-mannose beta-1,2-N-acetylglucosaminyltransferase 1 isoform X1"/>
    <property type="match status" value="1"/>
</dbReference>
<dbReference type="Gene3D" id="3.90.550.10">
    <property type="entry name" value="Spore Coat Polysaccharide Biosynthesis Protein SpsA, Chain A"/>
    <property type="match status" value="1"/>
</dbReference>
<dbReference type="InterPro" id="IPR004139">
    <property type="entry name" value="Glyco_trans_13"/>
</dbReference>
<dbReference type="InterPro" id="IPR039477">
    <property type="entry name" value="ILEI/PANDER_dom"/>
</dbReference>
<dbReference type="InterPro" id="IPR029044">
    <property type="entry name" value="Nucleotide-diphossugar_trans"/>
</dbReference>
<dbReference type="InterPro" id="IPR052463">
    <property type="entry name" value="O-linked_mannose_GnT"/>
</dbReference>
<dbReference type="InterPro" id="IPR039474">
    <property type="entry name" value="POMGNT1_PANDER-like"/>
</dbReference>
<dbReference type="PANTHER" id="PTHR46396">
    <property type="entry name" value="PROTEIN O-LINKED-MANNOSE BETA-1,2-N-ACETYLGLUCOSAMINYLTRANSFERASE 1"/>
    <property type="match status" value="1"/>
</dbReference>
<dbReference type="PANTHER" id="PTHR46396:SF1">
    <property type="entry name" value="PROTEIN O-LINKED-MANNOSE BETA-1,2-N-ACETYLGLUCOSAMINYLTRANSFERASE 1"/>
    <property type="match status" value="1"/>
</dbReference>
<dbReference type="Pfam" id="PF03071">
    <property type="entry name" value="GNT-I"/>
    <property type="match status" value="1"/>
</dbReference>
<dbReference type="Pfam" id="PF15711">
    <property type="entry name" value="ILEI"/>
    <property type="match status" value="1"/>
</dbReference>
<dbReference type="SUPFAM" id="SSF53448">
    <property type="entry name" value="Nucleotide-diphospho-sugar transferases"/>
    <property type="match status" value="1"/>
</dbReference>
<dbReference type="PROSITE" id="PS52031">
    <property type="entry name" value="GG_LECTIN"/>
    <property type="match status" value="1"/>
</dbReference>
<feature type="chain" id="PRO_0000191389" description="Protein O-linked-mannose beta-1,2-N-acetylglucosaminyltransferase 1">
    <location>
        <begin position="1"/>
        <end position="660"/>
    </location>
</feature>
<feature type="topological domain" description="Cytoplasmic" evidence="2">
    <location>
        <begin position="1"/>
        <end position="37"/>
    </location>
</feature>
<feature type="transmembrane region" description="Helical; Signal-anchor for type II membrane protein" evidence="2">
    <location>
        <begin position="38"/>
        <end position="58"/>
    </location>
</feature>
<feature type="topological domain" description="Lumenal" evidence="2">
    <location>
        <begin position="59"/>
        <end position="660"/>
    </location>
</feature>
<feature type="domain" description="GG-type lectin" evidence="3">
    <location>
        <begin position="97"/>
        <end position="258"/>
    </location>
</feature>
<feature type="region of interest" description="Catalytic" evidence="1">
    <location>
        <begin position="300"/>
        <end position="646"/>
    </location>
</feature>
<feature type="region of interest" description="Interaction with O-glycosylated substrate glycoprotein" evidence="1">
    <location>
        <begin position="473"/>
        <end position="481"/>
    </location>
</feature>
<feature type="region of interest" description="Interaction with O-glycosylated substrate glycoprotein" evidence="1">
    <location>
        <begin position="506"/>
        <end position="512"/>
    </location>
</feature>
<feature type="region of interest" description="Interaction with O-glycosylated substrate glycoprotein" evidence="1">
    <location>
        <begin position="600"/>
        <end position="605"/>
    </location>
</feature>
<feature type="region of interest" description="Disordered" evidence="4">
    <location>
        <begin position="637"/>
        <end position="660"/>
    </location>
</feature>
<feature type="binding site" evidence="1">
    <location>
        <position position="129"/>
    </location>
    <ligand>
        <name>a carbohydrate</name>
        <dbReference type="ChEBI" id="CHEBI:16646"/>
    </ligand>
</feature>
<feature type="binding site" evidence="1">
    <location>
        <position position="179"/>
    </location>
    <ligand>
        <name>a carbohydrate</name>
        <dbReference type="ChEBI" id="CHEBI:16646"/>
    </ligand>
</feature>
<feature type="binding site" evidence="1">
    <location>
        <position position="207"/>
    </location>
    <ligand>
        <name>a carbohydrate</name>
        <dbReference type="ChEBI" id="CHEBI:16646"/>
    </ligand>
</feature>
<feature type="binding site" evidence="1">
    <location>
        <begin position="307"/>
        <end position="311"/>
    </location>
    <ligand>
        <name>UDP-N-acetyl-alpha-D-glucosamine</name>
        <dbReference type="ChEBI" id="CHEBI:57705"/>
    </ligand>
</feature>
<feature type="binding site" evidence="1">
    <location>
        <position position="338"/>
    </location>
    <ligand>
        <name>UDP-N-acetyl-alpha-D-glucosamine</name>
        <dbReference type="ChEBI" id="CHEBI:57705"/>
    </ligand>
</feature>
<feature type="binding site" evidence="1">
    <location>
        <position position="371"/>
    </location>
    <ligand>
        <name>UDP-N-acetyl-alpha-D-glucosamine</name>
        <dbReference type="ChEBI" id="CHEBI:57705"/>
    </ligand>
</feature>
<feature type="binding site" evidence="1">
    <location>
        <begin position="394"/>
        <end position="395"/>
    </location>
    <ligand>
        <name>UDP-N-acetyl-alpha-D-glucosamine</name>
        <dbReference type="ChEBI" id="CHEBI:57705"/>
    </ligand>
</feature>
<feature type="binding site" evidence="1">
    <location>
        <position position="395"/>
    </location>
    <ligand>
        <name>Mn(2+)</name>
        <dbReference type="ChEBI" id="CHEBI:29035"/>
    </ligand>
</feature>
<feature type="binding site" evidence="1">
    <location>
        <position position="500"/>
    </location>
    <ligand>
        <name>Mn(2+)</name>
        <dbReference type="ChEBI" id="CHEBI:29035"/>
    </ligand>
</feature>
<feature type="binding site" evidence="1">
    <location>
        <begin position="506"/>
        <end position="507"/>
    </location>
    <ligand>
        <name>UDP-N-acetyl-alpha-D-glucosamine</name>
        <dbReference type="ChEBI" id="CHEBI:57705"/>
    </ligand>
</feature>
<feature type="modified residue" description="Phosphoserine" evidence="1">
    <location>
        <position position="7"/>
    </location>
</feature>
<feature type="disulfide bond" evidence="1">
    <location>
        <begin position="254"/>
        <end position="281"/>
    </location>
</feature>
<feature type="disulfide bond" evidence="1">
    <location>
        <begin position="269"/>
        <end position="279"/>
    </location>
</feature>
<feature type="disulfide bond" evidence="1">
    <location>
        <begin position="421"/>
        <end position="490"/>
    </location>
</feature>
<feature type="disulfide bond" evidence="1">
    <location>
        <begin position="562"/>
        <end position="596"/>
    </location>
</feature>
<gene>
    <name type="primary">POMGNT1</name>
</gene>
<proteinExistence type="evidence at transcript level"/>
<comment type="function">
    <text evidence="1">Participates in O-mannosyl glycosylation by catalyzing the addition of N-acetylglucosamine to O-linked mannose on glycoproteins. Catalyzes the synthesis of the GlcNAc(beta1-2)Man(alpha1-)O-Ser/Thr moiety on alpha-dystroglycan and other O-mannosylated proteins, providing the necessary basis for the addition of further carbohydrate moieties. Is specific for alpha linked terminal mannose.</text>
</comment>
<comment type="catalytic activity">
    <reaction evidence="1">
        <text>3-O-(alpha-D-mannosyl)-L-threonyl-[protein] + UDP-N-acetyl-alpha-D-glucosamine = 3-O-(N-acetyl-beta-D-glucosaminyl-(1-&gt;2)-alpha-D-mannosyl)-L-threonyl-[protein] + UDP + H(+)</text>
        <dbReference type="Rhea" id="RHEA:54128"/>
        <dbReference type="Rhea" id="RHEA-COMP:13547"/>
        <dbReference type="Rhea" id="RHEA-COMP:13802"/>
        <dbReference type="ChEBI" id="CHEBI:15378"/>
        <dbReference type="ChEBI" id="CHEBI:57705"/>
        <dbReference type="ChEBI" id="CHEBI:58223"/>
        <dbReference type="ChEBI" id="CHEBI:137323"/>
        <dbReference type="ChEBI" id="CHEBI:138067"/>
    </reaction>
</comment>
<comment type="cofactor">
    <cofactor evidence="1">
        <name>Mn(2+)</name>
        <dbReference type="ChEBI" id="CHEBI:29035"/>
    </cofactor>
    <text evidence="1">The manganese ion interacts primarily with the substrate UDP-N-acetylglucosamine.</text>
</comment>
<comment type="pathway">
    <text evidence="1">Protein modification; protein glycosylation.</text>
</comment>
<comment type="subunit">
    <text evidence="1">Interacts with DAG1 (via O-linked mannose moiety). Interacts (via transmembrane domain) with FKTN; the interaction is direct and is required for normal location in Golgi membranes.</text>
</comment>
<comment type="subcellular location">
    <subcellularLocation>
        <location evidence="1">Golgi apparatus membrane</location>
        <topology evidence="1">Single-pass type II membrane protein</topology>
    </subcellularLocation>
</comment>
<comment type="domain">
    <text evidence="1">The GG-type lectin domain is known as the stem domain in POMGnT1. It mediates specific interaction with beta-linked N-acetylglucosamine moieties of O-glycosylated proteins. It also interacts with its product, N-acetyl-beta-D-glucosaminyl-(1-&gt;2)-O-alpha-D-mannosylprotein.</text>
</comment>
<comment type="similarity">
    <text evidence="5">Belongs to the glycosyltransferase 13 family.</text>
</comment>